<feature type="signal peptide" evidence="1">
    <location>
        <begin position="1"/>
        <end position="21"/>
    </location>
</feature>
<feature type="chain" id="PRO_1000061940" description="Tol-Pal system protein TolB" evidence="1">
    <location>
        <begin position="22"/>
        <end position="430"/>
    </location>
</feature>
<dbReference type="EMBL" id="CP000720">
    <property type="protein sequence ID" value="ABS47462.1"/>
    <property type="molecule type" value="Genomic_DNA"/>
</dbReference>
<dbReference type="RefSeq" id="WP_002210738.1">
    <property type="nucleotide sequence ID" value="NC_009708.1"/>
</dbReference>
<dbReference type="SMR" id="A7FKQ3"/>
<dbReference type="GeneID" id="57977261"/>
<dbReference type="KEGG" id="ypi:YpsIP31758_2868"/>
<dbReference type="HOGENOM" id="CLU_047123_0_0_6"/>
<dbReference type="Proteomes" id="UP000002412">
    <property type="component" value="Chromosome"/>
</dbReference>
<dbReference type="GO" id="GO:0042597">
    <property type="term" value="C:periplasmic space"/>
    <property type="evidence" value="ECO:0007669"/>
    <property type="project" value="UniProtKB-SubCell"/>
</dbReference>
<dbReference type="GO" id="GO:0051301">
    <property type="term" value="P:cell division"/>
    <property type="evidence" value="ECO:0007669"/>
    <property type="project" value="UniProtKB-UniRule"/>
</dbReference>
<dbReference type="GO" id="GO:0017038">
    <property type="term" value="P:protein import"/>
    <property type="evidence" value="ECO:0007669"/>
    <property type="project" value="InterPro"/>
</dbReference>
<dbReference type="FunFam" id="2.120.10.30:FF:000022">
    <property type="entry name" value="Tol-Pal system protein TolB"/>
    <property type="match status" value="1"/>
</dbReference>
<dbReference type="Gene3D" id="2.120.10.30">
    <property type="entry name" value="TolB, C-terminal domain"/>
    <property type="match status" value="1"/>
</dbReference>
<dbReference type="Gene3D" id="3.40.50.10070">
    <property type="entry name" value="TolB, N-terminal domain"/>
    <property type="match status" value="1"/>
</dbReference>
<dbReference type="HAMAP" id="MF_00671">
    <property type="entry name" value="TolB"/>
    <property type="match status" value="1"/>
</dbReference>
<dbReference type="InterPro" id="IPR011042">
    <property type="entry name" value="6-blade_b-propeller_TolB-like"/>
</dbReference>
<dbReference type="InterPro" id="IPR011659">
    <property type="entry name" value="PD40"/>
</dbReference>
<dbReference type="InterPro" id="IPR014167">
    <property type="entry name" value="Tol-Pal_TolB"/>
</dbReference>
<dbReference type="InterPro" id="IPR007195">
    <property type="entry name" value="TolB_N"/>
</dbReference>
<dbReference type="NCBIfam" id="TIGR02800">
    <property type="entry name" value="propeller_TolB"/>
    <property type="match status" value="1"/>
</dbReference>
<dbReference type="PANTHER" id="PTHR36842:SF1">
    <property type="entry name" value="PROTEIN TOLB"/>
    <property type="match status" value="1"/>
</dbReference>
<dbReference type="PANTHER" id="PTHR36842">
    <property type="entry name" value="PROTEIN TOLB HOMOLOG"/>
    <property type="match status" value="1"/>
</dbReference>
<dbReference type="Pfam" id="PF07676">
    <property type="entry name" value="PD40"/>
    <property type="match status" value="4"/>
</dbReference>
<dbReference type="Pfam" id="PF04052">
    <property type="entry name" value="TolB_N"/>
    <property type="match status" value="1"/>
</dbReference>
<dbReference type="SUPFAM" id="SSF52964">
    <property type="entry name" value="TolB, N-terminal domain"/>
    <property type="match status" value="1"/>
</dbReference>
<dbReference type="SUPFAM" id="SSF69304">
    <property type="entry name" value="Tricorn protease N-terminal domain"/>
    <property type="match status" value="1"/>
</dbReference>
<keyword id="KW-0131">Cell cycle</keyword>
<keyword id="KW-0132">Cell division</keyword>
<keyword id="KW-0574">Periplasm</keyword>
<keyword id="KW-0732">Signal</keyword>
<gene>
    <name evidence="1" type="primary">tolB</name>
    <name type="ordered locus">YpsIP31758_2868</name>
</gene>
<comment type="function">
    <text evidence="1">Part of the Tol-Pal system, which plays a role in outer membrane invagination during cell division and is important for maintaining outer membrane integrity. TolB occupies a key intermediary position in the Tol-Pal system because it communicates directly with both membrane-embedded components, Pal in the outer membrane and TolA in the inner membrane.</text>
</comment>
<comment type="subunit">
    <text evidence="1">The Tol-Pal system is composed of five core proteins: the inner membrane proteins TolA, TolQ and TolR, the periplasmic protein TolB and the outer membrane protein Pal. They form a network linking the inner and outer membranes and the peptidoglycan layer.</text>
</comment>
<comment type="subcellular location">
    <subcellularLocation>
        <location evidence="1">Periplasm</location>
    </subcellularLocation>
</comment>
<comment type="similarity">
    <text evidence="1">Belongs to the TolB family.</text>
</comment>
<name>TOLB_YERP3</name>
<evidence type="ECO:0000255" key="1">
    <source>
        <dbReference type="HAMAP-Rule" id="MF_00671"/>
    </source>
</evidence>
<accession>A7FKQ3</accession>
<reference key="1">
    <citation type="journal article" date="2007" name="PLoS Genet.">
        <title>The complete genome sequence of Yersinia pseudotuberculosis IP31758, the causative agent of Far East scarlet-like fever.</title>
        <authorList>
            <person name="Eppinger M."/>
            <person name="Rosovitz M.J."/>
            <person name="Fricke W.F."/>
            <person name="Rasko D.A."/>
            <person name="Kokorina G."/>
            <person name="Fayolle C."/>
            <person name="Lindler L.E."/>
            <person name="Carniel E."/>
            <person name="Ravel J."/>
        </authorList>
    </citation>
    <scope>NUCLEOTIDE SEQUENCE [LARGE SCALE GENOMIC DNA]</scope>
    <source>
        <strain>IP 31758</strain>
    </source>
</reference>
<sequence>MKQAFRVALGFLVLWASVLHAEVRIEITQGVDSARPIGVVPFKWMGPGTPPEEIGAIVGADLRNSGKFNPIDAARMPQQPSTAAEVTPAAWTALGIDAVVVGQVQPSADGSYVVSYQLVDTSGSAGSILAQNQYKVTKQWLRYSAHTVSDEVFEKLTGIKGAFRTRIAYVVKTNGGKFPHELRVSDYDGYNQFVVHRSPEPLMSPAWSPDGSKIAYVTFESGKSALVIQTLANGAIRQVASFPRHNGAPAFSPDGTKLAFALSKSGSLNLYVMDLASGQISQVTDGRSNNTEPSWFPDSQNLAYTSDQGGRPQVYKVNINGGVPQRITWEGSQNQNADVSPDGKFLVLVSSNGGAQHIAKQDLETGAVQVLTDTLLDETPSIAPNGTMVIYSSTQGLGSVLQLVSTDGRFKARLPATDGQVKFPAWSPYL</sequence>
<protein>
    <recommendedName>
        <fullName evidence="1">Tol-Pal system protein TolB</fullName>
    </recommendedName>
</protein>
<organism>
    <name type="scientific">Yersinia pseudotuberculosis serotype O:1b (strain IP 31758)</name>
    <dbReference type="NCBI Taxonomy" id="349747"/>
    <lineage>
        <taxon>Bacteria</taxon>
        <taxon>Pseudomonadati</taxon>
        <taxon>Pseudomonadota</taxon>
        <taxon>Gammaproteobacteria</taxon>
        <taxon>Enterobacterales</taxon>
        <taxon>Yersiniaceae</taxon>
        <taxon>Yersinia</taxon>
    </lineage>
</organism>
<proteinExistence type="inferred from homology"/>